<sequence length="293" mass="33244">MKRSRSQNLITEMILLLRVSLHPFVVDGCKWCLTAYPKGYNFIGYLSLYLEVADNGSLPFGWRRHARYTLTLVNQNSKKSFQPNEVQEWFDDSIKWGCPSMFPLNEIHAKDSGFLVNGELKIVAEIDILEVIGDVDVSEGISTVKETIHVNGFQLLPSQAKSVSHIFERHPEIASEIHPKNSSLRTGYMSLLLSLIETLSQSPQELSKDDLCDVYIAIGCMKNAGFKLDWLENKLYEVAQKKEDDEAGETRLREMEEKLKDLKLKCSKMEALVEEEKAKVSAAKAHLSFDDVV</sequence>
<comment type="sequence caution" evidence="3">
    <conflict type="erroneous gene model prediction">
        <sequence resource="EMBL-CDS" id="CAB68178"/>
    </conflict>
</comment>
<feature type="chain" id="PRO_0000429305" description="MATH domain and coiled-coil domain-containing protein At3g58400">
    <location>
        <begin position="1"/>
        <end position="293"/>
    </location>
</feature>
<feature type="domain" description="MATH" evidence="2">
    <location>
        <begin position="3"/>
        <end position="126"/>
    </location>
</feature>
<feature type="coiled-coil region" evidence="1">
    <location>
        <begin position="227"/>
        <end position="285"/>
    </location>
</feature>
<proteinExistence type="predicted"/>
<dbReference type="EMBL" id="AL137081">
    <property type="protein sequence ID" value="CAB68178.1"/>
    <property type="status" value="ALT_SEQ"/>
    <property type="molecule type" value="Genomic_DNA"/>
</dbReference>
<dbReference type="EMBL" id="CP002686">
    <property type="protein sequence ID" value="AEE79777.2"/>
    <property type="molecule type" value="Genomic_DNA"/>
</dbReference>
<dbReference type="PIR" id="T46000">
    <property type="entry name" value="T46000"/>
</dbReference>
<dbReference type="RefSeq" id="NP_001319794.1">
    <property type="nucleotide sequence ID" value="NM_001339921.1"/>
</dbReference>
<dbReference type="SMR" id="Q9M2H6"/>
<dbReference type="FunCoup" id="Q9M2H6">
    <property type="interactions" value="40"/>
</dbReference>
<dbReference type="STRING" id="3702.Q9M2H6"/>
<dbReference type="PaxDb" id="3702-AT3G58400.1"/>
<dbReference type="ProteomicsDB" id="238689"/>
<dbReference type="EnsemblPlants" id="AT3G58400.1">
    <property type="protein sequence ID" value="AT3G58400.1"/>
    <property type="gene ID" value="AT3G58400"/>
</dbReference>
<dbReference type="GeneID" id="825009"/>
<dbReference type="Gramene" id="AT3G58400.1">
    <property type="protein sequence ID" value="AT3G58400.1"/>
    <property type="gene ID" value="AT3G58400"/>
</dbReference>
<dbReference type="KEGG" id="ath:AT3G58400"/>
<dbReference type="Araport" id="AT3G58400"/>
<dbReference type="TAIR" id="AT3G58400"/>
<dbReference type="eggNOG" id="KOG1987">
    <property type="taxonomic scope" value="Eukaryota"/>
</dbReference>
<dbReference type="HOGENOM" id="CLU_026537_0_0_1"/>
<dbReference type="InParanoid" id="Q9M2H6"/>
<dbReference type="OMA" id="IASEIHP"/>
<dbReference type="PRO" id="PR:Q9M2H6"/>
<dbReference type="Proteomes" id="UP000006548">
    <property type="component" value="Chromosome 3"/>
</dbReference>
<dbReference type="CDD" id="cd00121">
    <property type="entry name" value="MATH"/>
    <property type="match status" value="1"/>
</dbReference>
<dbReference type="Gene3D" id="2.60.210.10">
    <property type="entry name" value="Apoptosis, Tumor Necrosis Factor Receptor Associated Protein 2, Chain A"/>
    <property type="match status" value="1"/>
</dbReference>
<dbReference type="InterPro" id="IPR050804">
    <property type="entry name" value="MATH-CC_domain_protein"/>
</dbReference>
<dbReference type="InterPro" id="IPR002083">
    <property type="entry name" value="MATH/TRAF_dom"/>
</dbReference>
<dbReference type="InterPro" id="IPR008974">
    <property type="entry name" value="TRAF-like"/>
</dbReference>
<dbReference type="PANTHER" id="PTHR46236:SF7">
    <property type="entry name" value="PROTEIN RESTRICTED TEV MOVEMENT 3"/>
    <property type="match status" value="1"/>
</dbReference>
<dbReference type="PANTHER" id="PTHR46236">
    <property type="entry name" value="TRAF-LIKE SUPERFAMILY PROTEIN"/>
    <property type="match status" value="1"/>
</dbReference>
<dbReference type="Pfam" id="PF22486">
    <property type="entry name" value="MATH_2"/>
    <property type="match status" value="1"/>
</dbReference>
<dbReference type="SMART" id="SM00061">
    <property type="entry name" value="MATH"/>
    <property type="match status" value="1"/>
</dbReference>
<dbReference type="SUPFAM" id="SSF49599">
    <property type="entry name" value="TRAF domain-like"/>
    <property type="match status" value="1"/>
</dbReference>
<dbReference type="PROSITE" id="PS50144">
    <property type="entry name" value="MATH"/>
    <property type="match status" value="1"/>
</dbReference>
<protein>
    <recommendedName>
        <fullName>MATH domain and coiled-coil domain-containing protein At3g58400</fullName>
    </recommendedName>
    <alternativeName>
        <fullName>RTM3-like protein At3g58400</fullName>
    </alternativeName>
</protein>
<reference key="1">
    <citation type="journal article" date="2000" name="Nature">
        <title>Sequence and analysis of chromosome 3 of the plant Arabidopsis thaliana.</title>
        <authorList>
            <person name="Salanoubat M."/>
            <person name="Lemcke K."/>
            <person name="Rieger M."/>
            <person name="Ansorge W."/>
            <person name="Unseld M."/>
            <person name="Fartmann B."/>
            <person name="Valle G."/>
            <person name="Bloecker H."/>
            <person name="Perez-Alonso M."/>
            <person name="Obermaier B."/>
            <person name="Delseny M."/>
            <person name="Boutry M."/>
            <person name="Grivell L.A."/>
            <person name="Mache R."/>
            <person name="Puigdomenech P."/>
            <person name="De Simone V."/>
            <person name="Choisne N."/>
            <person name="Artiguenave F."/>
            <person name="Robert C."/>
            <person name="Brottier P."/>
            <person name="Wincker P."/>
            <person name="Cattolico L."/>
            <person name="Weissenbach J."/>
            <person name="Saurin W."/>
            <person name="Quetier F."/>
            <person name="Schaefer M."/>
            <person name="Mueller-Auer S."/>
            <person name="Gabel C."/>
            <person name="Fuchs M."/>
            <person name="Benes V."/>
            <person name="Wurmbach E."/>
            <person name="Drzonek H."/>
            <person name="Erfle H."/>
            <person name="Jordan N."/>
            <person name="Bangert S."/>
            <person name="Wiedelmann R."/>
            <person name="Kranz H."/>
            <person name="Voss H."/>
            <person name="Holland R."/>
            <person name="Brandt P."/>
            <person name="Nyakatura G."/>
            <person name="Vezzi A."/>
            <person name="D'Angelo M."/>
            <person name="Pallavicini A."/>
            <person name="Toppo S."/>
            <person name="Simionati B."/>
            <person name="Conrad A."/>
            <person name="Hornischer K."/>
            <person name="Kauer G."/>
            <person name="Loehnert T.-H."/>
            <person name="Nordsiek G."/>
            <person name="Reichelt J."/>
            <person name="Scharfe M."/>
            <person name="Schoen O."/>
            <person name="Bargues M."/>
            <person name="Terol J."/>
            <person name="Climent J."/>
            <person name="Navarro P."/>
            <person name="Collado C."/>
            <person name="Perez-Perez A."/>
            <person name="Ottenwaelder B."/>
            <person name="Duchemin D."/>
            <person name="Cooke R."/>
            <person name="Laudie M."/>
            <person name="Berger-Llauro C."/>
            <person name="Purnelle B."/>
            <person name="Masuy D."/>
            <person name="de Haan M."/>
            <person name="Maarse A.C."/>
            <person name="Alcaraz J.-P."/>
            <person name="Cottet A."/>
            <person name="Casacuberta E."/>
            <person name="Monfort A."/>
            <person name="Argiriou A."/>
            <person name="Flores M."/>
            <person name="Liguori R."/>
            <person name="Vitale D."/>
            <person name="Mannhaupt G."/>
            <person name="Haase D."/>
            <person name="Schoof H."/>
            <person name="Rudd S."/>
            <person name="Zaccaria P."/>
            <person name="Mewes H.-W."/>
            <person name="Mayer K.F.X."/>
            <person name="Kaul S."/>
            <person name="Town C.D."/>
            <person name="Koo H.L."/>
            <person name="Tallon L.J."/>
            <person name="Jenkins J."/>
            <person name="Rooney T."/>
            <person name="Rizzo M."/>
            <person name="Walts A."/>
            <person name="Utterback T."/>
            <person name="Fujii C.Y."/>
            <person name="Shea T.P."/>
            <person name="Creasy T.H."/>
            <person name="Haas B."/>
            <person name="Maiti R."/>
            <person name="Wu D."/>
            <person name="Peterson J."/>
            <person name="Van Aken S."/>
            <person name="Pai G."/>
            <person name="Militscher J."/>
            <person name="Sellers P."/>
            <person name="Gill J.E."/>
            <person name="Feldblyum T.V."/>
            <person name="Preuss D."/>
            <person name="Lin X."/>
            <person name="Nierman W.C."/>
            <person name="Salzberg S.L."/>
            <person name="White O."/>
            <person name="Venter J.C."/>
            <person name="Fraser C.M."/>
            <person name="Kaneko T."/>
            <person name="Nakamura Y."/>
            <person name="Sato S."/>
            <person name="Kato T."/>
            <person name="Asamizu E."/>
            <person name="Sasamoto S."/>
            <person name="Kimura T."/>
            <person name="Idesawa K."/>
            <person name="Kawashima K."/>
            <person name="Kishida Y."/>
            <person name="Kiyokawa C."/>
            <person name="Kohara M."/>
            <person name="Matsumoto M."/>
            <person name="Matsuno A."/>
            <person name="Muraki A."/>
            <person name="Nakayama S."/>
            <person name="Nakazaki N."/>
            <person name="Shinpo S."/>
            <person name="Takeuchi C."/>
            <person name="Wada T."/>
            <person name="Watanabe A."/>
            <person name="Yamada M."/>
            <person name="Yasuda M."/>
            <person name="Tabata S."/>
        </authorList>
    </citation>
    <scope>NUCLEOTIDE SEQUENCE [LARGE SCALE GENOMIC DNA]</scope>
    <source>
        <strain>cv. Columbia</strain>
    </source>
</reference>
<reference key="2">
    <citation type="journal article" date="2017" name="Plant J.">
        <title>Araport11: a complete reannotation of the Arabidopsis thaliana reference genome.</title>
        <authorList>
            <person name="Cheng C.Y."/>
            <person name="Krishnakumar V."/>
            <person name="Chan A.P."/>
            <person name="Thibaud-Nissen F."/>
            <person name="Schobel S."/>
            <person name="Town C.D."/>
        </authorList>
    </citation>
    <scope>GENOME REANNOTATION</scope>
    <source>
        <strain>cv. Columbia</strain>
    </source>
</reference>
<reference key="3">
    <citation type="journal article" date="2010" name="Plant Physiol.">
        <title>RTM3, which controls long-distance movement of potyviruses, is a member of a new plant gene family encoding a meprin and TRAF homology domain-containing protein.</title>
        <authorList>
            <person name="Cosson P."/>
            <person name="Sofer L."/>
            <person name="Le Q.H."/>
            <person name="Leger V."/>
            <person name="Schurdi-Levraud V."/>
            <person name="Whitham S.A."/>
            <person name="Yamamoto M.L."/>
            <person name="Gopalan S."/>
            <person name="Le Gall O."/>
            <person name="Candresse T."/>
            <person name="Carrington J.C."/>
            <person name="Revers F."/>
        </authorList>
    </citation>
    <scope>GENE FAMILY</scope>
</reference>
<accession>Q9M2H6</accession>
<organism>
    <name type="scientific">Arabidopsis thaliana</name>
    <name type="common">Mouse-ear cress</name>
    <dbReference type="NCBI Taxonomy" id="3702"/>
    <lineage>
        <taxon>Eukaryota</taxon>
        <taxon>Viridiplantae</taxon>
        <taxon>Streptophyta</taxon>
        <taxon>Embryophyta</taxon>
        <taxon>Tracheophyta</taxon>
        <taxon>Spermatophyta</taxon>
        <taxon>Magnoliopsida</taxon>
        <taxon>eudicotyledons</taxon>
        <taxon>Gunneridae</taxon>
        <taxon>Pentapetalae</taxon>
        <taxon>rosids</taxon>
        <taxon>malvids</taxon>
        <taxon>Brassicales</taxon>
        <taxon>Brassicaceae</taxon>
        <taxon>Camelineae</taxon>
        <taxon>Arabidopsis</taxon>
    </lineage>
</organism>
<evidence type="ECO:0000255" key="1"/>
<evidence type="ECO:0000255" key="2">
    <source>
        <dbReference type="PROSITE-ProRule" id="PRU00129"/>
    </source>
</evidence>
<evidence type="ECO:0000305" key="3"/>
<keyword id="KW-0175">Coiled coil</keyword>
<keyword id="KW-1185">Reference proteome</keyword>
<name>MCC28_ARATH</name>
<gene>
    <name type="ordered locus">At3g58400</name>
    <name type="ORF">F9D24.310</name>
</gene>